<reference key="1">
    <citation type="journal article" date="2004" name="Proc. Natl. Acad. Sci. U.S.A.">
        <title>Genome sequence of the enterobacterial phytopathogen Erwinia carotovora subsp. atroseptica and characterization of virulence factors.</title>
        <authorList>
            <person name="Bell K.S."/>
            <person name="Sebaihia M."/>
            <person name="Pritchard L."/>
            <person name="Holden M.T.G."/>
            <person name="Hyman L.J."/>
            <person name="Holeva M.C."/>
            <person name="Thomson N.R."/>
            <person name="Bentley S.D."/>
            <person name="Churcher L.J.C."/>
            <person name="Mungall K."/>
            <person name="Atkin R."/>
            <person name="Bason N."/>
            <person name="Brooks K."/>
            <person name="Chillingworth T."/>
            <person name="Clark K."/>
            <person name="Doggett J."/>
            <person name="Fraser A."/>
            <person name="Hance Z."/>
            <person name="Hauser H."/>
            <person name="Jagels K."/>
            <person name="Moule S."/>
            <person name="Norbertczak H."/>
            <person name="Ormond D."/>
            <person name="Price C."/>
            <person name="Quail M.A."/>
            <person name="Sanders M."/>
            <person name="Walker D."/>
            <person name="Whitehead S."/>
            <person name="Salmond G.P.C."/>
            <person name="Birch P.R.J."/>
            <person name="Parkhill J."/>
            <person name="Toth I.K."/>
        </authorList>
    </citation>
    <scope>NUCLEOTIDE SEQUENCE [LARGE SCALE GENOMIC DNA]</scope>
    <source>
        <strain>SCRI 1043 / ATCC BAA-672</strain>
    </source>
</reference>
<keyword id="KW-0067">ATP-binding</keyword>
<keyword id="KW-0997">Cell inner membrane</keyword>
<keyword id="KW-1003">Cell membrane</keyword>
<keyword id="KW-0472">Membrane</keyword>
<keyword id="KW-0547">Nucleotide-binding</keyword>
<keyword id="KW-0592">Phosphate transport</keyword>
<keyword id="KW-1185">Reference proteome</keyword>
<keyword id="KW-1278">Translocase</keyword>
<keyword id="KW-0813">Transport</keyword>
<evidence type="ECO:0000255" key="1">
    <source>
        <dbReference type="HAMAP-Rule" id="MF_01702"/>
    </source>
</evidence>
<proteinExistence type="inferred from homology"/>
<gene>
    <name evidence="1" type="primary">pstB2</name>
    <name type="ordered locus">ECA4474</name>
</gene>
<feature type="chain" id="PRO_0000092818" description="Phosphate import ATP-binding protein PstB 2">
    <location>
        <begin position="1"/>
        <end position="258"/>
    </location>
</feature>
<feature type="domain" description="ABC transporter" evidence="1">
    <location>
        <begin position="12"/>
        <end position="253"/>
    </location>
</feature>
<feature type="binding site" evidence="1">
    <location>
        <begin position="44"/>
        <end position="51"/>
    </location>
    <ligand>
        <name>ATP</name>
        <dbReference type="ChEBI" id="CHEBI:30616"/>
    </ligand>
</feature>
<organism>
    <name type="scientific">Pectobacterium atrosepticum (strain SCRI 1043 / ATCC BAA-672)</name>
    <name type="common">Erwinia carotovora subsp. atroseptica</name>
    <dbReference type="NCBI Taxonomy" id="218491"/>
    <lineage>
        <taxon>Bacteria</taxon>
        <taxon>Pseudomonadati</taxon>
        <taxon>Pseudomonadota</taxon>
        <taxon>Gammaproteobacteria</taxon>
        <taxon>Enterobacterales</taxon>
        <taxon>Pectobacteriaceae</taxon>
        <taxon>Pectobacterium</taxon>
    </lineage>
</organism>
<comment type="function">
    <text evidence="1">Part of the ABC transporter complex PstSACB involved in phosphate import. Responsible for energy coupling to the transport system.</text>
</comment>
<comment type="catalytic activity">
    <reaction evidence="1">
        <text>phosphate(out) + ATP + H2O = ADP + 2 phosphate(in) + H(+)</text>
        <dbReference type="Rhea" id="RHEA:24440"/>
        <dbReference type="ChEBI" id="CHEBI:15377"/>
        <dbReference type="ChEBI" id="CHEBI:15378"/>
        <dbReference type="ChEBI" id="CHEBI:30616"/>
        <dbReference type="ChEBI" id="CHEBI:43474"/>
        <dbReference type="ChEBI" id="CHEBI:456216"/>
        <dbReference type="EC" id="7.3.2.1"/>
    </reaction>
</comment>
<comment type="subunit">
    <text evidence="1">The complex is composed of two ATP-binding proteins (PstB), two transmembrane proteins (PstC and PstA) and a solute-binding protein (PstS).</text>
</comment>
<comment type="subcellular location">
    <subcellularLocation>
        <location evidence="1">Cell inner membrane</location>
        <topology evidence="1">Peripheral membrane protein</topology>
    </subcellularLocation>
</comment>
<comment type="similarity">
    <text evidence="1">Belongs to the ABC transporter superfamily. Phosphate importer (TC 3.A.1.7) family.</text>
</comment>
<accession>Q6CYN3</accession>
<name>PSTB2_PECAS</name>
<protein>
    <recommendedName>
        <fullName evidence="1">Phosphate import ATP-binding protein PstB 2</fullName>
        <ecNumber evidence="1">7.3.2.1</ecNumber>
    </recommendedName>
    <alternativeName>
        <fullName evidence="1">ABC phosphate transporter 2</fullName>
    </alternativeName>
    <alternativeName>
        <fullName evidence="1">Phosphate-transporting ATPase 2</fullName>
    </alternativeName>
</protein>
<sequence length="258" mass="29117">MSMTTETSTNKIQVRDLNFYYGKFHALKNITLDIAANQVTAFIGPSGCGKSTLLRTLNKMYQLYPEQRAEGDILLDGNNILTDKQDIALLRAKVGMVFQKPTPFPMSIYDNIAFGVRLFEKLSRADMDERVQWALTKAALWQETKDKLHQSGYSLSGGQQQRLCIARGIAIRPDVLLLDEPCSALDPISTGRIEELISELKKDYTVVIVTHNMQQAARCSDHTAFMYLGELIEFSDTDTLFTAPRQKQTEDYITGRYG</sequence>
<dbReference type="EC" id="7.3.2.1" evidence="1"/>
<dbReference type="EMBL" id="BX950851">
    <property type="protein sequence ID" value="CAG77369.1"/>
    <property type="molecule type" value="Genomic_DNA"/>
</dbReference>
<dbReference type="SMR" id="Q6CYN3"/>
<dbReference type="STRING" id="218491.ECA4474"/>
<dbReference type="KEGG" id="eca:ECA4474"/>
<dbReference type="PATRIC" id="fig|218491.5.peg.4562"/>
<dbReference type="eggNOG" id="COG1117">
    <property type="taxonomic scope" value="Bacteria"/>
</dbReference>
<dbReference type="HOGENOM" id="CLU_000604_1_22_6"/>
<dbReference type="OrthoDB" id="9802264at2"/>
<dbReference type="Proteomes" id="UP000007966">
    <property type="component" value="Chromosome"/>
</dbReference>
<dbReference type="GO" id="GO:0005886">
    <property type="term" value="C:plasma membrane"/>
    <property type="evidence" value="ECO:0007669"/>
    <property type="project" value="UniProtKB-SubCell"/>
</dbReference>
<dbReference type="GO" id="GO:0005524">
    <property type="term" value="F:ATP binding"/>
    <property type="evidence" value="ECO:0007669"/>
    <property type="project" value="UniProtKB-KW"/>
</dbReference>
<dbReference type="GO" id="GO:0016887">
    <property type="term" value="F:ATP hydrolysis activity"/>
    <property type="evidence" value="ECO:0007669"/>
    <property type="project" value="InterPro"/>
</dbReference>
<dbReference type="GO" id="GO:0015415">
    <property type="term" value="F:ATPase-coupled phosphate ion transmembrane transporter activity"/>
    <property type="evidence" value="ECO:0007669"/>
    <property type="project" value="UniProtKB-EC"/>
</dbReference>
<dbReference type="GO" id="GO:0035435">
    <property type="term" value="P:phosphate ion transmembrane transport"/>
    <property type="evidence" value="ECO:0007669"/>
    <property type="project" value="InterPro"/>
</dbReference>
<dbReference type="CDD" id="cd03260">
    <property type="entry name" value="ABC_PstB_phosphate_transporter"/>
    <property type="match status" value="1"/>
</dbReference>
<dbReference type="FunFam" id="3.40.50.300:FF:000132">
    <property type="entry name" value="Phosphate import ATP-binding protein PstB"/>
    <property type="match status" value="1"/>
</dbReference>
<dbReference type="Gene3D" id="3.40.50.300">
    <property type="entry name" value="P-loop containing nucleotide triphosphate hydrolases"/>
    <property type="match status" value="1"/>
</dbReference>
<dbReference type="InterPro" id="IPR003593">
    <property type="entry name" value="AAA+_ATPase"/>
</dbReference>
<dbReference type="InterPro" id="IPR003439">
    <property type="entry name" value="ABC_transporter-like_ATP-bd"/>
</dbReference>
<dbReference type="InterPro" id="IPR017871">
    <property type="entry name" value="ABC_transporter-like_CS"/>
</dbReference>
<dbReference type="InterPro" id="IPR027417">
    <property type="entry name" value="P-loop_NTPase"/>
</dbReference>
<dbReference type="InterPro" id="IPR005670">
    <property type="entry name" value="PstB-like"/>
</dbReference>
<dbReference type="NCBIfam" id="TIGR00972">
    <property type="entry name" value="3a0107s01c2"/>
    <property type="match status" value="1"/>
</dbReference>
<dbReference type="PANTHER" id="PTHR43423">
    <property type="entry name" value="ABC TRANSPORTER I FAMILY MEMBER 17"/>
    <property type="match status" value="1"/>
</dbReference>
<dbReference type="PANTHER" id="PTHR43423:SF3">
    <property type="entry name" value="PHOSPHATE IMPORT ATP-BINDING PROTEIN PSTB"/>
    <property type="match status" value="1"/>
</dbReference>
<dbReference type="Pfam" id="PF00005">
    <property type="entry name" value="ABC_tran"/>
    <property type="match status" value="1"/>
</dbReference>
<dbReference type="SMART" id="SM00382">
    <property type="entry name" value="AAA"/>
    <property type="match status" value="1"/>
</dbReference>
<dbReference type="SUPFAM" id="SSF52540">
    <property type="entry name" value="P-loop containing nucleoside triphosphate hydrolases"/>
    <property type="match status" value="1"/>
</dbReference>
<dbReference type="PROSITE" id="PS00211">
    <property type="entry name" value="ABC_TRANSPORTER_1"/>
    <property type="match status" value="1"/>
</dbReference>
<dbReference type="PROSITE" id="PS50893">
    <property type="entry name" value="ABC_TRANSPORTER_2"/>
    <property type="match status" value="1"/>
</dbReference>
<dbReference type="PROSITE" id="PS51238">
    <property type="entry name" value="PSTB"/>
    <property type="match status" value="1"/>
</dbReference>